<gene>
    <name evidence="1" type="primary">rpsM</name>
    <name type="ordered locus">jhp_1216</name>
</gene>
<proteinExistence type="inferred from homology"/>
<protein>
    <recommendedName>
        <fullName evidence="1">Small ribosomal subunit protein uS13</fullName>
    </recommendedName>
    <alternativeName>
        <fullName evidence="3">30S ribosomal protein S13</fullName>
    </alternativeName>
</protein>
<evidence type="ECO:0000255" key="1">
    <source>
        <dbReference type="HAMAP-Rule" id="MF_01315"/>
    </source>
</evidence>
<evidence type="ECO:0000256" key="2">
    <source>
        <dbReference type="SAM" id="MobiDB-lite"/>
    </source>
</evidence>
<evidence type="ECO:0000305" key="3"/>
<keyword id="KW-0687">Ribonucleoprotein</keyword>
<keyword id="KW-0689">Ribosomal protein</keyword>
<keyword id="KW-0694">RNA-binding</keyword>
<keyword id="KW-0699">rRNA-binding</keyword>
<keyword id="KW-0820">tRNA-binding</keyword>
<reference key="1">
    <citation type="journal article" date="1999" name="Nature">
        <title>Genomic sequence comparison of two unrelated isolates of the human gastric pathogen Helicobacter pylori.</title>
        <authorList>
            <person name="Alm R.A."/>
            <person name="Ling L.-S.L."/>
            <person name="Moir D.T."/>
            <person name="King B.L."/>
            <person name="Brown E.D."/>
            <person name="Doig P.C."/>
            <person name="Smith D.R."/>
            <person name="Noonan B."/>
            <person name="Guild B.C."/>
            <person name="deJonge B.L."/>
            <person name="Carmel G."/>
            <person name="Tummino P.J."/>
            <person name="Caruso A."/>
            <person name="Uria-Nickelsen M."/>
            <person name="Mills D.M."/>
            <person name="Ives C."/>
            <person name="Gibson R."/>
            <person name="Merberg D."/>
            <person name="Mills S.D."/>
            <person name="Jiang Q."/>
            <person name="Taylor D.E."/>
            <person name="Vovis G.F."/>
            <person name="Trust T.J."/>
        </authorList>
    </citation>
    <scope>NUCLEOTIDE SEQUENCE [LARGE SCALE GENOMIC DNA]</scope>
    <source>
        <strain>J99 / ATCC 700824</strain>
    </source>
</reference>
<organism>
    <name type="scientific">Helicobacter pylori (strain J99 / ATCC 700824)</name>
    <name type="common">Campylobacter pylori J99</name>
    <dbReference type="NCBI Taxonomy" id="85963"/>
    <lineage>
        <taxon>Bacteria</taxon>
        <taxon>Pseudomonadati</taxon>
        <taxon>Campylobacterota</taxon>
        <taxon>Epsilonproteobacteria</taxon>
        <taxon>Campylobacterales</taxon>
        <taxon>Helicobacteraceae</taxon>
        <taxon>Helicobacter</taxon>
    </lineage>
</organism>
<name>RS13_HELPJ</name>
<sequence length="120" mass="13481">MARIAGVDLPKKKRVEYALTCKNGIGLKSSREILEAVGISFDKRVHELSEDEVSSIAKKIQQSYLVEGDLRKKVQMDIKSLMDLGNYRGIRHRKGLPVRGQTTKNNARTRKGKKKTVGSK</sequence>
<dbReference type="EMBL" id="AE001439">
    <property type="protein sequence ID" value="AAD06818.1"/>
    <property type="molecule type" value="Genomic_DNA"/>
</dbReference>
<dbReference type="PIR" id="H71832">
    <property type="entry name" value="H71832"/>
</dbReference>
<dbReference type="RefSeq" id="WP_000090798.1">
    <property type="nucleotide sequence ID" value="NC_000921.1"/>
</dbReference>
<dbReference type="SMR" id="Q9ZJT2"/>
<dbReference type="KEGG" id="hpj:jhp_1216"/>
<dbReference type="eggNOG" id="COG0099">
    <property type="taxonomic scope" value="Bacteria"/>
</dbReference>
<dbReference type="Proteomes" id="UP000000804">
    <property type="component" value="Chromosome"/>
</dbReference>
<dbReference type="GO" id="GO:0005829">
    <property type="term" value="C:cytosol"/>
    <property type="evidence" value="ECO:0007669"/>
    <property type="project" value="TreeGrafter"/>
</dbReference>
<dbReference type="GO" id="GO:0015935">
    <property type="term" value="C:small ribosomal subunit"/>
    <property type="evidence" value="ECO:0007669"/>
    <property type="project" value="TreeGrafter"/>
</dbReference>
<dbReference type="GO" id="GO:0019843">
    <property type="term" value="F:rRNA binding"/>
    <property type="evidence" value="ECO:0007669"/>
    <property type="project" value="UniProtKB-UniRule"/>
</dbReference>
<dbReference type="GO" id="GO:0003735">
    <property type="term" value="F:structural constituent of ribosome"/>
    <property type="evidence" value="ECO:0007669"/>
    <property type="project" value="InterPro"/>
</dbReference>
<dbReference type="GO" id="GO:0000049">
    <property type="term" value="F:tRNA binding"/>
    <property type="evidence" value="ECO:0007669"/>
    <property type="project" value="UniProtKB-UniRule"/>
</dbReference>
<dbReference type="GO" id="GO:0006412">
    <property type="term" value="P:translation"/>
    <property type="evidence" value="ECO:0007669"/>
    <property type="project" value="UniProtKB-UniRule"/>
</dbReference>
<dbReference type="FunFam" id="1.10.8.50:FF:000001">
    <property type="entry name" value="30S ribosomal protein S13"/>
    <property type="match status" value="1"/>
</dbReference>
<dbReference type="FunFam" id="4.10.910.10:FF:000001">
    <property type="entry name" value="30S ribosomal protein S13"/>
    <property type="match status" value="1"/>
</dbReference>
<dbReference type="Gene3D" id="1.10.8.50">
    <property type="match status" value="1"/>
</dbReference>
<dbReference type="Gene3D" id="4.10.910.10">
    <property type="entry name" value="30s ribosomal protein s13, domain 2"/>
    <property type="match status" value="1"/>
</dbReference>
<dbReference type="HAMAP" id="MF_01315">
    <property type="entry name" value="Ribosomal_uS13"/>
    <property type="match status" value="1"/>
</dbReference>
<dbReference type="InterPro" id="IPR027437">
    <property type="entry name" value="Rbsml_uS13_C"/>
</dbReference>
<dbReference type="InterPro" id="IPR001892">
    <property type="entry name" value="Ribosomal_uS13"/>
</dbReference>
<dbReference type="InterPro" id="IPR010979">
    <property type="entry name" value="Ribosomal_uS13-like_H2TH"/>
</dbReference>
<dbReference type="InterPro" id="IPR019980">
    <property type="entry name" value="Ribosomal_uS13_bac-type"/>
</dbReference>
<dbReference type="InterPro" id="IPR018269">
    <property type="entry name" value="Ribosomal_uS13_CS"/>
</dbReference>
<dbReference type="NCBIfam" id="TIGR03631">
    <property type="entry name" value="uS13_bact"/>
    <property type="match status" value="1"/>
</dbReference>
<dbReference type="PANTHER" id="PTHR10871">
    <property type="entry name" value="30S RIBOSOMAL PROTEIN S13/40S RIBOSOMAL PROTEIN S18"/>
    <property type="match status" value="1"/>
</dbReference>
<dbReference type="PANTHER" id="PTHR10871:SF1">
    <property type="entry name" value="SMALL RIBOSOMAL SUBUNIT PROTEIN US13M"/>
    <property type="match status" value="1"/>
</dbReference>
<dbReference type="Pfam" id="PF00416">
    <property type="entry name" value="Ribosomal_S13"/>
    <property type="match status" value="1"/>
</dbReference>
<dbReference type="PIRSF" id="PIRSF002134">
    <property type="entry name" value="Ribosomal_S13"/>
    <property type="match status" value="1"/>
</dbReference>
<dbReference type="SUPFAM" id="SSF46946">
    <property type="entry name" value="S13-like H2TH domain"/>
    <property type="match status" value="1"/>
</dbReference>
<dbReference type="PROSITE" id="PS00646">
    <property type="entry name" value="RIBOSOMAL_S13_1"/>
    <property type="match status" value="1"/>
</dbReference>
<dbReference type="PROSITE" id="PS50159">
    <property type="entry name" value="RIBOSOMAL_S13_2"/>
    <property type="match status" value="1"/>
</dbReference>
<accession>Q9ZJT2</accession>
<comment type="function">
    <text evidence="1">Located at the top of the head of the 30S subunit, it contacts several helices of the 16S rRNA. In the 70S ribosome it contacts the 23S rRNA (bridge B1a) and protein L5 of the 50S subunit (bridge B1b), connecting the 2 subunits; these bridges are implicated in subunit movement. Contacts the tRNAs in the A and P-sites.</text>
</comment>
<comment type="subunit">
    <text evidence="1">Part of the 30S ribosomal subunit. Forms a loose heterodimer with protein S19. Forms two bridges to the 50S subunit in the 70S ribosome.</text>
</comment>
<comment type="similarity">
    <text evidence="1">Belongs to the universal ribosomal protein uS13 family.</text>
</comment>
<feature type="chain" id="PRO_0000132097" description="Small ribosomal subunit protein uS13">
    <location>
        <begin position="1"/>
        <end position="120"/>
    </location>
</feature>
<feature type="region of interest" description="Disordered" evidence="2">
    <location>
        <begin position="92"/>
        <end position="120"/>
    </location>
</feature>
<feature type="compositionally biased region" description="Basic residues" evidence="2">
    <location>
        <begin position="107"/>
        <end position="120"/>
    </location>
</feature>